<proteinExistence type="evidence at protein level"/>
<sequence length="156" mass="17700">MPRRRVVAAREILPDPKFSSQTIAKFMNHVMQDGKKSIAESIVYGALERVQEKNKVDPVEFFETTLEKVRPMVEVKARRVGGATYQVPMEVRPSRRTALAMRWLVDAAAKRSEKTMALRLAGELLDAAEGKGAAIKKREDVHRMAEANKAFSHYRF</sequence>
<protein>
    <recommendedName>
        <fullName evidence="1">Small ribosomal subunit protein uS7</fullName>
    </recommendedName>
    <alternativeName>
        <fullName evidence="2">30S ribosomal protein S7</fullName>
    </alternativeName>
</protein>
<feature type="chain" id="PRO_1000125878" description="Small ribosomal subunit protein uS7">
    <location>
        <begin position="1"/>
        <end position="156"/>
    </location>
</feature>
<feature type="turn" evidence="3">
    <location>
        <begin position="16"/>
        <end position="18"/>
    </location>
</feature>
<feature type="helix" evidence="3">
    <location>
        <begin position="21"/>
        <end position="30"/>
    </location>
</feature>
<feature type="helix" evidence="3">
    <location>
        <begin position="36"/>
        <end position="53"/>
    </location>
</feature>
<feature type="helix" evidence="3">
    <location>
        <begin position="58"/>
        <end position="69"/>
    </location>
</feature>
<feature type="strand" evidence="3">
    <location>
        <begin position="74"/>
        <end position="76"/>
    </location>
</feature>
<feature type="strand" evidence="3">
    <location>
        <begin position="81"/>
        <end position="83"/>
    </location>
</feature>
<feature type="strand" evidence="3">
    <location>
        <begin position="87"/>
        <end position="89"/>
    </location>
</feature>
<feature type="helix" evidence="3">
    <location>
        <begin position="93"/>
        <end position="110"/>
    </location>
</feature>
<feature type="helix" evidence="3">
    <location>
        <begin position="116"/>
        <end position="129"/>
    </location>
</feature>
<feature type="helix" evidence="3">
    <location>
        <begin position="133"/>
        <end position="138"/>
    </location>
</feature>
<keyword id="KW-0002">3D-structure</keyword>
<keyword id="KW-0687">Ribonucleoprotein</keyword>
<keyword id="KW-0689">Ribosomal protein</keyword>
<keyword id="KW-0694">RNA-binding</keyword>
<keyword id="KW-0699">rRNA-binding</keyword>
<keyword id="KW-0820">tRNA-binding</keyword>
<gene>
    <name evidence="1" type="primary">rpsG</name>
    <name type="ordered locus">AB57_0912</name>
</gene>
<comment type="function">
    <text evidence="1">One of the primary rRNA binding proteins, it binds directly to 16S rRNA where it nucleates assembly of the head domain of the 30S subunit. Is located at the subunit interface close to the decoding center, probably blocks exit of the E-site tRNA.</text>
</comment>
<comment type="subunit">
    <text evidence="1">Part of the 30S ribosomal subunit. Contacts proteins S9 and S11.</text>
</comment>
<comment type="similarity">
    <text evidence="1">Belongs to the universal ribosomal protein uS7 family.</text>
</comment>
<reference key="1">
    <citation type="journal article" date="2008" name="J. Bacteriol.">
        <title>Comparative genome sequence analysis of multidrug-resistant Acinetobacter baumannii.</title>
        <authorList>
            <person name="Adams M.D."/>
            <person name="Goglin K."/>
            <person name="Molyneaux N."/>
            <person name="Hujer K.M."/>
            <person name="Lavender H."/>
            <person name="Jamison J.J."/>
            <person name="MacDonald I.J."/>
            <person name="Martin K.M."/>
            <person name="Russo T."/>
            <person name="Campagnari A.A."/>
            <person name="Hujer A.M."/>
            <person name="Bonomo R.A."/>
            <person name="Gill S.R."/>
        </authorList>
    </citation>
    <scope>NUCLEOTIDE SEQUENCE [LARGE SCALE GENOMIC DNA]</scope>
    <source>
        <strain>AB0057</strain>
    </source>
</reference>
<accession>B7I7S0</accession>
<dbReference type="EMBL" id="CP001182">
    <property type="protein sequence ID" value="ACJ40704.1"/>
    <property type="molecule type" value="Genomic_DNA"/>
</dbReference>
<dbReference type="RefSeq" id="WP_001138055.1">
    <property type="nucleotide sequence ID" value="NC_011586.2"/>
</dbReference>
<dbReference type="PDB" id="6V39">
    <property type="method" value="EM"/>
    <property type="resolution" value="3.04 A"/>
    <property type="chains" value="g=1-156"/>
</dbReference>
<dbReference type="PDB" id="6V3A">
    <property type="method" value="EM"/>
    <property type="resolution" value="2.82 A"/>
    <property type="chains" value="g=1-156"/>
</dbReference>
<dbReference type="PDB" id="6V3B">
    <property type="method" value="EM"/>
    <property type="resolution" value="2.91 A"/>
    <property type="chains" value="g=1-156"/>
</dbReference>
<dbReference type="PDB" id="6V3E">
    <property type="method" value="EM"/>
    <property type="resolution" value="4.40 A"/>
    <property type="chains" value="g=1-156"/>
</dbReference>
<dbReference type="PDB" id="7M4U">
    <property type="method" value="EM"/>
    <property type="resolution" value="2.71 A"/>
    <property type="chains" value="g=1-156"/>
</dbReference>
<dbReference type="PDB" id="7M4W">
    <property type="method" value="EM"/>
    <property type="resolution" value="2.55 A"/>
    <property type="chains" value="g=1-156"/>
</dbReference>
<dbReference type="PDB" id="7M4X">
    <property type="method" value="EM"/>
    <property type="resolution" value="2.66 A"/>
    <property type="chains" value="g=1-156"/>
</dbReference>
<dbReference type="PDB" id="7M4Y">
    <property type="method" value="EM"/>
    <property type="resolution" value="2.50 A"/>
    <property type="chains" value="g=1-156"/>
</dbReference>
<dbReference type="PDB" id="7M4Z">
    <property type="method" value="EM"/>
    <property type="resolution" value="2.92 A"/>
    <property type="chains" value="g=1-156"/>
</dbReference>
<dbReference type="PDB" id="7RYF">
    <property type="method" value="EM"/>
    <property type="resolution" value="2.65 A"/>
    <property type="chains" value="g=1-156"/>
</dbReference>
<dbReference type="PDB" id="7RYG">
    <property type="method" value="EM"/>
    <property type="resolution" value="2.38 A"/>
    <property type="chains" value="g=1-156"/>
</dbReference>
<dbReference type="PDB" id="7RYH">
    <property type="method" value="EM"/>
    <property type="resolution" value="2.43 A"/>
    <property type="chains" value="g=1-156"/>
</dbReference>
<dbReference type="PDB" id="7UVV">
    <property type="method" value="EM"/>
    <property type="resolution" value="2.50 A"/>
    <property type="chains" value="g=1-156"/>
</dbReference>
<dbReference type="PDB" id="7UVW">
    <property type="method" value="EM"/>
    <property type="resolution" value="2.37 A"/>
    <property type="chains" value="g=1-156"/>
</dbReference>
<dbReference type="PDB" id="7UVX">
    <property type="method" value="EM"/>
    <property type="resolution" value="2.35 A"/>
    <property type="chains" value="g=1-156"/>
</dbReference>
<dbReference type="PDB" id="7UVY">
    <property type="method" value="EM"/>
    <property type="resolution" value="2.39 A"/>
    <property type="chains" value="g=1-156"/>
</dbReference>
<dbReference type="PDB" id="7UVZ">
    <property type="method" value="EM"/>
    <property type="resolution" value="2.21 A"/>
    <property type="chains" value="g=1-156"/>
</dbReference>
<dbReference type="PDB" id="7UW1">
    <property type="method" value="EM"/>
    <property type="resolution" value="2.21 A"/>
    <property type="chains" value="g=1-156"/>
</dbReference>
<dbReference type="PDBsum" id="6V39"/>
<dbReference type="PDBsum" id="6V3A"/>
<dbReference type="PDBsum" id="6V3B"/>
<dbReference type="PDBsum" id="6V3E"/>
<dbReference type="PDBsum" id="7M4U"/>
<dbReference type="PDBsum" id="7M4W"/>
<dbReference type="PDBsum" id="7M4X"/>
<dbReference type="PDBsum" id="7M4Y"/>
<dbReference type="PDBsum" id="7M4Z"/>
<dbReference type="PDBsum" id="7RYF"/>
<dbReference type="PDBsum" id="7RYG"/>
<dbReference type="PDBsum" id="7RYH"/>
<dbReference type="PDBsum" id="7UVV"/>
<dbReference type="PDBsum" id="7UVW"/>
<dbReference type="PDBsum" id="7UVX"/>
<dbReference type="PDBsum" id="7UVY"/>
<dbReference type="PDBsum" id="7UVZ"/>
<dbReference type="PDBsum" id="7UW1"/>
<dbReference type="EMDB" id="EMD-21030"/>
<dbReference type="EMDB" id="EMD-21031"/>
<dbReference type="EMDB" id="EMD-21032"/>
<dbReference type="EMDB" id="EMD-21034"/>
<dbReference type="EMDB" id="EMD-23666"/>
<dbReference type="EMDB" id="EMD-23668"/>
<dbReference type="EMDB" id="EMD-23669"/>
<dbReference type="EMDB" id="EMD-23670"/>
<dbReference type="EMDB" id="EMD-23671"/>
<dbReference type="EMDB" id="EMD-24738"/>
<dbReference type="EMDB" id="EMD-24739"/>
<dbReference type="EMDB" id="EMD-24740"/>
<dbReference type="EMDB" id="EMD-26817"/>
<dbReference type="EMDB" id="EMD-26818"/>
<dbReference type="EMDB" id="EMD-26819"/>
<dbReference type="EMDB" id="EMD-26820"/>
<dbReference type="EMDB" id="EMD-26821"/>
<dbReference type="EMDB" id="EMD-26822"/>
<dbReference type="SMR" id="B7I7S0"/>
<dbReference type="IntAct" id="B7I7S0">
    <property type="interactions" value="1"/>
</dbReference>
<dbReference type="GeneID" id="92892796"/>
<dbReference type="KEGG" id="abn:AB57_0912"/>
<dbReference type="HOGENOM" id="CLU_072226_1_1_6"/>
<dbReference type="Proteomes" id="UP000007094">
    <property type="component" value="Chromosome"/>
</dbReference>
<dbReference type="GO" id="GO:0015935">
    <property type="term" value="C:small ribosomal subunit"/>
    <property type="evidence" value="ECO:0007669"/>
    <property type="project" value="InterPro"/>
</dbReference>
<dbReference type="GO" id="GO:0019843">
    <property type="term" value="F:rRNA binding"/>
    <property type="evidence" value="ECO:0007669"/>
    <property type="project" value="UniProtKB-UniRule"/>
</dbReference>
<dbReference type="GO" id="GO:0003735">
    <property type="term" value="F:structural constituent of ribosome"/>
    <property type="evidence" value="ECO:0007669"/>
    <property type="project" value="InterPro"/>
</dbReference>
<dbReference type="GO" id="GO:0000049">
    <property type="term" value="F:tRNA binding"/>
    <property type="evidence" value="ECO:0007669"/>
    <property type="project" value="UniProtKB-UniRule"/>
</dbReference>
<dbReference type="GO" id="GO:0006412">
    <property type="term" value="P:translation"/>
    <property type="evidence" value="ECO:0007669"/>
    <property type="project" value="UniProtKB-UniRule"/>
</dbReference>
<dbReference type="CDD" id="cd14869">
    <property type="entry name" value="uS7_Bacteria"/>
    <property type="match status" value="1"/>
</dbReference>
<dbReference type="FunFam" id="1.10.455.10:FF:000001">
    <property type="entry name" value="30S ribosomal protein S7"/>
    <property type="match status" value="1"/>
</dbReference>
<dbReference type="Gene3D" id="1.10.455.10">
    <property type="entry name" value="Ribosomal protein S7 domain"/>
    <property type="match status" value="1"/>
</dbReference>
<dbReference type="HAMAP" id="MF_00480_B">
    <property type="entry name" value="Ribosomal_uS7_B"/>
    <property type="match status" value="1"/>
</dbReference>
<dbReference type="InterPro" id="IPR000235">
    <property type="entry name" value="Ribosomal_uS7"/>
</dbReference>
<dbReference type="InterPro" id="IPR005717">
    <property type="entry name" value="Ribosomal_uS7_bac/org-type"/>
</dbReference>
<dbReference type="InterPro" id="IPR020606">
    <property type="entry name" value="Ribosomal_uS7_CS"/>
</dbReference>
<dbReference type="InterPro" id="IPR023798">
    <property type="entry name" value="Ribosomal_uS7_dom"/>
</dbReference>
<dbReference type="InterPro" id="IPR036823">
    <property type="entry name" value="Ribosomal_uS7_dom_sf"/>
</dbReference>
<dbReference type="NCBIfam" id="TIGR01029">
    <property type="entry name" value="rpsG_bact"/>
    <property type="match status" value="1"/>
</dbReference>
<dbReference type="PANTHER" id="PTHR11205">
    <property type="entry name" value="RIBOSOMAL PROTEIN S7"/>
    <property type="match status" value="1"/>
</dbReference>
<dbReference type="Pfam" id="PF00177">
    <property type="entry name" value="Ribosomal_S7"/>
    <property type="match status" value="1"/>
</dbReference>
<dbReference type="PIRSF" id="PIRSF002122">
    <property type="entry name" value="RPS7p_RPS7a_RPS5e_RPS7o"/>
    <property type="match status" value="1"/>
</dbReference>
<dbReference type="SUPFAM" id="SSF47973">
    <property type="entry name" value="Ribosomal protein S7"/>
    <property type="match status" value="1"/>
</dbReference>
<dbReference type="PROSITE" id="PS00052">
    <property type="entry name" value="RIBOSOMAL_S7"/>
    <property type="match status" value="1"/>
</dbReference>
<name>RS7_ACIB5</name>
<evidence type="ECO:0000255" key="1">
    <source>
        <dbReference type="HAMAP-Rule" id="MF_00480"/>
    </source>
</evidence>
<evidence type="ECO:0000305" key="2"/>
<evidence type="ECO:0007829" key="3">
    <source>
        <dbReference type="PDB" id="7M4U"/>
    </source>
</evidence>
<organism>
    <name type="scientific">Acinetobacter baumannii (strain AB0057)</name>
    <dbReference type="NCBI Taxonomy" id="480119"/>
    <lineage>
        <taxon>Bacteria</taxon>
        <taxon>Pseudomonadati</taxon>
        <taxon>Pseudomonadota</taxon>
        <taxon>Gammaproteobacteria</taxon>
        <taxon>Moraxellales</taxon>
        <taxon>Moraxellaceae</taxon>
        <taxon>Acinetobacter</taxon>
        <taxon>Acinetobacter calcoaceticus/baumannii complex</taxon>
    </lineage>
</organism>